<sequence length="342" mass="38407">MKYLVLALCTYLCSQSGADENAAQGIPLEAQRLTGEPLVAYLRRSQNLFEVNSDPTPDFEQKIMSIKYKHQKLNLMVKEDPDPEVDIPPSYDPRDVWKNCTTFYIRDQANCGSCWAVSTAAAISDRICIASKAEKQVNISATDIMTCCRPQCGDGCEGGWPIEAWKYFIYDGVVSGGEYLTKDVCRPYPIHPCGHHGNDTYYGECRGTAPTPPCKRKCRPGVRKMYRIDKRYGKDAYIVKQSVKAIQSEILKNGPVVASFAVYEDFRHYKSGIYKHTAGELRGYHAVKMIGWGNENNTDFWLIANSWHNDWGEKGYFRIVRGSNDCGIEGTIAAGIVDTESL</sequence>
<dbReference type="EC" id="3.4.22.-"/>
<dbReference type="EMBL" id="M60213">
    <property type="protein sequence ID" value="AAA29171.1"/>
    <property type="molecule type" value="Genomic_DNA"/>
</dbReference>
<dbReference type="EMBL" id="M60212">
    <property type="protein sequence ID" value="AAA29171.1"/>
    <property type="status" value="JOINED"/>
    <property type="molecule type" value="Genomic_DNA"/>
</dbReference>
<dbReference type="PIR" id="A44965">
    <property type="entry name" value="A44965"/>
</dbReference>
<dbReference type="SMR" id="P25793"/>
<dbReference type="MEROPS" id="C01.101"/>
<dbReference type="GlyCosmos" id="P25793">
    <property type="glycosylation" value="4 sites, No reported glycans"/>
</dbReference>
<dbReference type="Proteomes" id="UP000025227">
    <property type="component" value="Unplaced"/>
</dbReference>
<dbReference type="GO" id="GO:0008234">
    <property type="term" value="F:cysteine-type peptidase activity"/>
    <property type="evidence" value="ECO:0007669"/>
    <property type="project" value="UniProtKB-KW"/>
</dbReference>
<dbReference type="GO" id="GO:0006508">
    <property type="term" value="P:proteolysis"/>
    <property type="evidence" value="ECO:0007669"/>
    <property type="project" value="UniProtKB-KW"/>
</dbReference>
<dbReference type="CDD" id="cd02620">
    <property type="entry name" value="Peptidase_C1A_CathepsinB"/>
    <property type="match status" value="1"/>
</dbReference>
<dbReference type="FunFam" id="3.90.70.10:FF:000031">
    <property type="entry name" value="Cathepsin B"/>
    <property type="match status" value="1"/>
</dbReference>
<dbReference type="Gene3D" id="3.90.70.10">
    <property type="entry name" value="Cysteine proteinases"/>
    <property type="match status" value="1"/>
</dbReference>
<dbReference type="InterPro" id="IPR038765">
    <property type="entry name" value="Papain-like_cys_pep_sf"/>
</dbReference>
<dbReference type="InterPro" id="IPR025661">
    <property type="entry name" value="Pept_asp_AS"/>
</dbReference>
<dbReference type="InterPro" id="IPR000169">
    <property type="entry name" value="Pept_cys_AS"/>
</dbReference>
<dbReference type="InterPro" id="IPR025660">
    <property type="entry name" value="Pept_his_AS"/>
</dbReference>
<dbReference type="InterPro" id="IPR013128">
    <property type="entry name" value="Peptidase_C1A"/>
</dbReference>
<dbReference type="InterPro" id="IPR000668">
    <property type="entry name" value="Peptidase_C1A_C"/>
</dbReference>
<dbReference type="PANTHER" id="PTHR12411">
    <property type="entry name" value="CYSTEINE PROTEASE FAMILY C1-RELATED"/>
    <property type="match status" value="1"/>
</dbReference>
<dbReference type="Pfam" id="PF00112">
    <property type="entry name" value="Peptidase_C1"/>
    <property type="match status" value="1"/>
</dbReference>
<dbReference type="PRINTS" id="PR00705">
    <property type="entry name" value="PAPAIN"/>
</dbReference>
<dbReference type="SMART" id="SM00645">
    <property type="entry name" value="Pept_C1"/>
    <property type="match status" value="1"/>
</dbReference>
<dbReference type="SUPFAM" id="SSF54001">
    <property type="entry name" value="Cysteine proteinases"/>
    <property type="match status" value="1"/>
</dbReference>
<dbReference type="PROSITE" id="PS00640">
    <property type="entry name" value="THIOL_PROTEASE_ASN"/>
    <property type="match status" value="1"/>
</dbReference>
<dbReference type="PROSITE" id="PS00139">
    <property type="entry name" value="THIOL_PROTEASE_CYS"/>
    <property type="match status" value="1"/>
</dbReference>
<dbReference type="PROSITE" id="PS00639">
    <property type="entry name" value="THIOL_PROTEASE_HIS"/>
    <property type="match status" value="1"/>
</dbReference>
<proteinExistence type="evidence at transcript level"/>
<protein>
    <recommendedName>
        <fullName>Cathepsin B-like cysteine proteinase 2</fullName>
        <ecNumber>3.4.22.-</ecNumber>
    </recommendedName>
</protein>
<gene>
    <name type="primary">AC-2</name>
</gene>
<reference key="1">
    <citation type="journal article" date="1990" name="Mol. Biochem. Parasitol.">
        <title>A developmentally regulated cysteine protease gene family in Haemonchus contortus.</title>
        <authorList>
            <person name="Pratt D."/>
            <person name="Cox G.N."/>
            <person name="Milhausen M.J."/>
            <person name="Boisvenue R.J."/>
        </authorList>
    </citation>
    <scope>NUCLEOTIDE SEQUENCE [GENOMIC DNA]</scope>
</reference>
<name>CYSP2_HAECO</name>
<organism>
    <name type="scientific">Haemonchus contortus</name>
    <name type="common">Barber pole worm</name>
    <dbReference type="NCBI Taxonomy" id="6289"/>
    <lineage>
        <taxon>Eukaryota</taxon>
        <taxon>Metazoa</taxon>
        <taxon>Ecdysozoa</taxon>
        <taxon>Nematoda</taxon>
        <taxon>Chromadorea</taxon>
        <taxon>Rhabditida</taxon>
        <taxon>Rhabditina</taxon>
        <taxon>Rhabditomorpha</taxon>
        <taxon>Strongyloidea</taxon>
        <taxon>Trichostrongylidae</taxon>
        <taxon>Haemonchus</taxon>
    </lineage>
</organism>
<comment type="function">
    <text>Expression of the protease correlates with blood-feeding and suggests a role for the protease in blood digestion.</text>
</comment>
<comment type="developmental stage">
    <text>At low level in the third and fourth-stage larvae, and abundant in adult worms.</text>
</comment>
<comment type="similarity">
    <text evidence="3 4 5">Belongs to the peptidase C1 family.</text>
</comment>
<evidence type="ECO:0000250" key="1"/>
<evidence type="ECO:0000255" key="2"/>
<evidence type="ECO:0000255" key="3">
    <source>
        <dbReference type="PROSITE-ProRule" id="PRU10088"/>
    </source>
</evidence>
<evidence type="ECO:0000255" key="4">
    <source>
        <dbReference type="PROSITE-ProRule" id="PRU10089"/>
    </source>
</evidence>
<evidence type="ECO:0000255" key="5">
    <source>
        <dbReference type="PROSITE-ProRule" id="PRU10090"/>
    </source>
</evidence>
<feature type="signal peptide" evidence="2">
    <location>
        <begin position="1"/>
        <end position="18"/>
    </location>
</feature>
<feature type="propeptide" id="PRO_0000026188" description="Activation peptide" evidence="2">
    <location>
        <begin position="19"/>
        <end position="86"/>
    </location>
</feature>
<feature type="chain" id="PRO_0000026189" description="Cathepsin B-like cysteine proteinase 2">
    <location>
        <begin position="87"/>
        <end position="342"/>
    </location>
</feature>
<feature type="active site" evidence="1">
    <location>
        <position position="114"/>
    </location>
</feature>
<feature type="active site" evidence="1">
    <location>
        <position position="285"/>
    </location>
</feature>
<feature type="active site" evidence="1">
    <location>
        <position position="305"/>
    </location>
</feature>
<feature type="glycosylation site" description="N-linked (GlcNAc...) asparagine" evidence="2">
    <location>
        <position position="99"/>
    </location>
</feature>
<feature type="glycosylation site" description="N-linked (GlcNAc...) asparagine" evidence="2">
    <location>
        <position position="138"/>
    </location>
</feature>
<feature type="glycosylation site" description="N-linked (GlcNAc...) asparagine" evidence="2">
    <location>
        <position position="198"/>
    </location>
</feature>
<feature type="glycosylation site" description="N-linked (GlcNAc...) asparagine" evidence="2">
    <location>
        <position position="296"/>
    </location>
</feature>
<feature type="disulfide bond" evidence="1">
    <location>
        <begin position="100"/>
        <end position="128"/>
    </location>
</feature>
<feature type="disulfide bond" evidence="1">
    <location>
        <begin position="111"/>
        <end position="156"/>
    </location>
</feature>
<feature type="disulfide bond" evidence="1">
    <location>
        <begin position="147"/>
        <end position="214"/>
    </location>
</feature>
<feature type="disulfide bond" evidence="1">
    <location>
        <begin position="148"/>
        <end position="152"/>
    </location>
</feature>
<feature type="disulfide bond" evidence="1">
    <location>
        <begin position="185"/>
        <end position="218"/>
    </location>
</feature>
<feature type="disulfide bond" evidence="1">
    <location>
        <begin position="193"/>
        <end position="205"/>
    </location>
</feature>
<keyword id="KW-1015">Disulfide bond</keyword>
<keyword id="KW-0325">Glycoprotein</keyword>
<keyword id="KW-0378">Hydrolase</keyword>
<keyword id="KW-0645">Protease</keyword>
<keyword id="KW-0732">Signal</keyword>
<keyword id="KW-0788">Thiol protease</keyword>
<keyword id="KW-0865">Zymogen</keyword>
<accession>P25793</accession>